<name>CPEB1_RAT</name>
<feature type="chain" id="PRO_0000269254" description="Cytoplasmic polyadenylation element-binding protein 1">
    <location>
        <begin position="1"/>
        <end position="561"/>
    </location>
</feature>
<feature type="domain" description="RRM 1" evidence="4">
    <location>
        <begin position="310"/>
        <end position="407"/>
    </location>
</feature>
<feature type="domain" description="RRM 2" evidence="4">
    <location>
        <begin position="429"/>
        <end position="510"/>
    </location>
</feature>
<feature type="region of interest" description="Disordered" evidence="5">
    <location>
        <begin position="158"/>
        <end position="194"/>
    </location>
</feature>
<feature type="region of interest" description="Necessary for stress granule assembly and correct localization in dcp1 bodies" evidence="1">
    <location>
        <begin position="329"/>
        <end position="561"/>
    </location>
</feature>
<feature type="compositionally biased region" description="Low complexity" evidence="5">
    <location>
        <begin position="176"/>
        <end position="194"/>
    </location>
</feature>
<feature type="binding site" evidence="3">
    <location>
        <position position="514"/>
    </location>
    <ligand>
        <name>Zn(2+)</name>
        <dbReference type="ChEBI" id="CHEBI:29105"/>
        <label>1</label>
    </ligand>
</feature>
<feature type="binding site" evidence="3">
    <location>
        <position position="517"/>
    </location>
    <ligand>
        <name>Zn(2+)</name>
        <dbReference type="ChEBI" id="CHEBI:29105"/>
        <label>1</label>
    </ligand>
</feature>
<feature type="binding site" evidence="3">
    <location>
        <position position="526"/>
    </location>
    <ligand>
        <name>Zn(2+)</name>
        <dbReference type="ChEBI" id="CHEBI:29105"/>
        <label>2</label>
    </ligand>
</feature>
<feature type="binding site" evidence="3">
    <location>
        <position position="531"/>
    </location>
    <ligand>
        <name>Zn(2+)</name>
        <dbReference type="ChEBI" id="CHEBI:29105"/>
        <label>2</label>
    </ligand>
</feature>
<feature type="binding site" evidence="3">
    <location>
        <position position="536"/>
    </location>
    <ligand>
        <name>Zn(2+)</name>
        <dbReference type="ChEBI" id="CHEBI:29105"/>
        <label>1</label>
    </ligand>
</feature>
<feature type="binding site" evidence="3">
    <location>
        <position position="539"/>
    </location>
    <ligand>
        <name>Zn(2+)</name>
        <dbReference type="ChEBI" id="CHEBI:29105"/>
        <label>1</label>
    </ligand>
</feature>
<feature type="binding site" evidence="3">
    <location>
        <position position="544"/>
    </location>
    <ligand>
        <name>Zn(2+)</name>
        <dbReference type="ChEBI" id="CHEBI:29105"/>
        <label>2</label>
    </ligand>
</feature>
<feature type="binding site" evidence="3">
    <location>
        <position position="552"/>
    </location>
    <ligand>
        <name>Zn(2+)</name>
        <dbReference type="ChEBI" id="CHEBI:29105"/>
        <label>2</label>
    </ligand>
</feature>
<feature type="site" description="Important for the positionning of RRM1 relative to RRM2" evidence="3">
    <location>
        <position position="410"/>
    </location>
</feature>
<feature type="modified residue" description="Phosphoserine" evidence="3">
    <location>
        <position position="43"/>
    </location>
</feature>
<feature type="modified residue" description="Phosphothreonine; by AURKA and CAMK2A" evidence="2">
    <location>
        <position position="171"/>
    </location>
</feature>
<dbReference type="EMBL" id="AABR03000812">
    <property type="status" value="NOT_ANNOTATED_CDS"/>
    <property type="molecule type" value="Genomic_DNA"/>
</dbReference>
<dbReference type="EMBL" id="AABR03000839">
    <property type="status" value="NOT_ANNOTATED_CDS"/>
    <property type="molecule type" value="Genomic_DNA"/>
</dbReference>
<dbReference type="RefSeq" id="NP_001099746.1">
    <property type="nucleotide sequence ID" value="NM_001106276.1"/>
</dbReference>
<dbReference type="BMRB" id="P0C279"/>
<dbReference type="SMR" id="P0C279"/>
<dbReference type="FunCoup" id="P0C279">
    <property type="interactions" value="870"/>
</dbReference>
<dbReference type="STRING" id="10116.ENSRNOP00000026009"/>
<dbReference type="GlyGen" id="P0C279">
    <property type="glycosylation" value="1 site"/>
</dbReference>
<dbReference type="iPTMnet" id="P0C279"/>
<dbReference type="PhosphoSitePlus" id="P0C279"/>
<dbReference type="PaxDb" id="10116-ENSRNOP00000026009"/>
<dbReference type="GeneID" id="293056"/>
<dbReference type="KEGG" id="rno:293056"/>
<dbReference type="UCSC" id="RGD:1310421">
    <property type="organism name" value="rat"/>
</dbReference>
<dbReference type="AGR" id="RGD:1310421"/>
<dbReference type="CTD" id="64506"/>
<dbReference type="RGD" id="1310421">
    <property type="gene designation" value="Cpeb1"/>
</dbReference>
<dbReference type="VEuPathDB" id="HostDB:ENSRNOG00000019161"/>
<dbReference type="eggNOG" id="KOG0129">
    <property type="taxonomic scope" value="Eukaryota"/>
</dbReference>
<dbReference type="InParanoid" id="P0C279"/>
<dbReference type="OrthoDB" id="10033548at2759"/>
<dbReference type="PhylomeDB" id="P0C279"/>
<dbReference type="TreeFam" id="TF317658"/>
<dbReference type="PRO" id="PR:P0C279"/>
<dbReference type="Proteomes" id="UP000002494">
    <property type="component" value="Chromosome 1"/>
</dbReference>
<dbReference type="Bgee" id="ENSRNOG00000019161">
    <property type="expression patterns" value="Expressed in Ammon's horn and 13 other cell types or tissues"/>
</dbReference>
<dbReference type="ExpressionAtlas" id="P0C279">
    <property type="expression patterns" value="baseline and differential"/>
</dbReference>
<dbReference type="GO" id="GO:0005813">
    <property type="term" value="C:centrosome"/>
    <property type="evidence" value="ECO:0000314"/>
    <property type="project" value="RGD"/>
</dbReference>
<dbReference type="GO" id="GO:0005737">
    <property type="term" value="C:cytoplasm"/>
    <property type="evidence" value="ECO:0000250"/>
    <property type="project" value="UniProtKB"/>
</dbReference>
<dbReference type="GO" id="GO:0098978">
    <property type="term" value="C:glutamatergic synapse"/>
    <property type="evidence" value="ECO:0000314"/>
    <property type="project" value="SynGO"/>
</dbReference>
<dbReference type="GO" id="GO:0030426">
    <property type="term" value="C:growth cone"/>
    <property type="evidence" value="ECO:0000314"/>
    <property type="project" value="RGD"/>
</dbReference>
<dbReference type="GO" id="GO:0072687">
    <property type="term" value="C:meiotic spindle"/>
    <property type="evidence" value="ECO:0000266"/>
    <property type="project" value="RGD"/>
</dbReference>
<dbReference type="GO" id="GO:0016020">
    <property type="term" value="C:membrane"/>
    <property type="evidence" value="ECO:0000266"/>
    <property type="project" value="RGD"/>
</dbReference>
<dbReference type="GO" id="GO:0043005">
    <property type="term" value="C:neuron projection"/>
    <property type="evidence" value="ECO:0000318"/>
    <property type="project" value="GO_Central"/>
</dbReference>
<dbReference type="GO" id="GO:0043025">
    <property type="term" value="C:neuronal cell body"/>
    <property type="evidence" value="ECO:0000314"/>
    <property type="project" value="RGD"/>
</dbReference>
<dbReference type="GO" id="GO:0005634">
    <property type="term" value="C:nucleus"/>
    <property type="evidence" value="ECO:0000250"/>
    <property type="project" value="UniProtKB"/>
</dbReference>
<dbReference type="GO" id="GO:0000932">
    <property type="term" value="C:P-body"/>
    <property type="evidence" value="ECO:0007669"/>
    <property type="project" value="UniProtKB-SubCell"/>
</dbReference>
<dbReference type="GO" id="GO:0048471">
    <property type="term" value="C:perinuclear region of cytoplasm"/>
    <property type="evidence" value="ECO:0000314"/>
    <property type="project" value="RGD"/>
</dbReference>
<dbReference type="GO" id="GO:0098794">
    <property type="term" value="C:postsynapse"/>
    <property type="evidence" value="ECO:0000314"/>
    <property type="project" value="SynGO"/>
</dbReference>
<dbReference type="GO" id="GO:0014069">
    <property type="term" value="C:postsynaptic density"/>
    <property type="evidence" value="ECO:0000314"/>
    <property type="project" value="SynGO"/>
</dbReference>
<dbReference type="GO" id="GO:1990904">
    <property type="term" value="C:ribonucleoprotein complex"/>
    <property type="evidence" value="ECO:0007669"/>
    <property type="project" value="UniProtKB-KW"/>
</dbReference>
<dbReference type="GO" id="GO:0045202">
    <property type="term" value="C:synapse"/>
    <property type="evidence" value="ECO:0000318"/>
    <property type="project" value="GO_Central"/>
</dbReference>
<dbReference type="GO" id="GO:0046872">
    <property type="term" value="F:metal ion binding"/>
    <property type="evidence" value="ECO:0007669"/>
    <property type="project" value="UniProtKB-KW"/>
</dbReference>
<dbReference type="GO" id="GO:0035925">
    <property type="term" value="F:mRNA 3'-UTR AU-rich region binding"/>
    <property type="evidence" value="ECO:0000250"/>
    <property type="project" value="UniProtKB"/>
</dbReference>
<dbReference type="GO" id="GO:0003730">
    <property type="term" value="F:mRNA 3'-UTR binding"/>
    <property type="evidence" value="ECO:0000314"/>
    <property type="project" value="RGD"/>
</dbReference>
<dbReference type="GO" id="GO:0003729">
    <property type="term" value="F:mRNA binding"/>
    <property type="evidence" value="ECO:0000266"/>
    <property type="project" value="RGD"/>
</dbReference>
<dbReference type="GO" id="GO:0000900">
    <property type="term" value="F:mRNA regulatory element binding translation repressor activity"/>
    <property type="evidence" value="ECO:0000250"/>
    <property type="project" value="UniProtKB"/>
</dbReference>
<dbReference type="GO" id="GO:0043022">
    <property type="term" value="F:ribosome binding"/>
    <property type="evidence" value="ECO:0000318"/>
    <property type="project" value="GO_Central"/>
</dbReference>
<dbReference type="GO" id="GO:0003723">
    <property type="term" value="F:RNA binding"/>
    <property type="evidence" value="ECO:0000266"/>
    <property type="project" value="RGD"/>
</dbReference>
<dbReference type="GO" id="GO:0008135">
    <property type="term" value="F:translation factor activity, RNA binding"/>
    <property type="evidence" value="ECO:0000318"/>
    <property type="project" value="GO_Central"/>
</dbReference>
<dbReference type="GO" id="GO:0071230">
    <property type="term" value="P:cellular response to amino acid stimulus"/>
    <property type="evidence" value="ECO:0000250"/>
    <property type="project" value="UniProtKB"/>
</dbReference>
<dbReference type="GO" id="GO:0071456">
    <property type="term" value="P:cellular response to hypoxia"/>
    <property type="evidence" value="ECO:0000250"/>
    <property type="project" value="UniProtKB"/>
</dbReference>
<dbReference type="GO" id="GO:0032869">
    <property type="term" value="P:cellular response to insulin stimulus"/>
    <property type="evidence" value="ECO:0000250"/>
    <property type="project" value="UniProtKB"/>
</dbReference>
<dbReference type="GO" id="GO:0071222">
    <property type="term" value="P:cellular response to lipopolysaccharide"/>
    <property type="evidence" value="ECO:0000270"/>
    <property type="project" value="RGD"/>
</dbReference>
<dbReference type="GO" id="GO:0006397">
    <property type="term" value="P:mRNA processing"/>
    <property type="evidence" value="ECO:0007669"/>
    <property type="project" value="UniProtKB-KW"/>
</dbReference>
<dbReference type="GO" id="GO:0051028">
    <property type="term" value="P:mRNA transport"/>
    <property type="evidence" value="ECO:0000315"/>
    <property type="project" value="RGD"/>
</dbReference>
<dbReference type="GO" id="GO:0008285">
    <property type="term" value="P:negative regulation of cell population proliferation"/>
    <property type="evidence" value="ECO:0000315"/>
    <property type="project" value="RGD"/>
</dbReference>
<dbReference type="GO" id="GO:2000766">
    <property type="term" value="P:negative regulation of cytoplasmic translation"/>
    <property type="evidence" value="ECO:0000250"/>
    <property type="project" value="UniProtKB"/>
</dbReference>
<dbReference type="GO" id="GO:0017148">
    <property type="term" value="P:negative regulation of translation"/>
    <property type="evidence" value="ECO:0000315"/>
    <property type="project" value="RGD"/>
</dbReference>
<dbReference type="GO" id="GO:0030335">
    <property type="term" value="P:positive regulation of cell migration"/>
    <property type="evidence" value="ECO:0000315"/>
    <property type="project" value="RGD"/>
</dbReference>
<dbReference type="GO" id="GO:1904146">
    <property type="term" value="P:positive regulation of meiotic cell cycle process involved in oocyte maturation"/>
    <property type="evidence" value="ECO:0000266"/>
    <property type="project" value="RGD"/>
</dbReference>
<dbReference type="GO" id="GO:0010976">
    <property type="term" value="P:positive regulation of neuron projection development"/>
    <property type="evidence" value="ECO:0000315"/>
    <property type="project" value="RGD"/>
</dbReference>
<dbReference type="GO" id="GO:0045429">
    <property type="term" value="P:positive regulation of nitric oxide biosynthetic process"/>
    <property type="evidence" value="ECO:0000315"/>
    <property type="project" value="RGD"/>
</dbReference>
<dbReference type="GO" id="GO:0045727">
    <property type="term" value="P:positive regulation of translation"/>
    <property type="evidence" value="ECO:0000315"/>
    <property type="project" value="RGD"/>
</dbReference>
<dbReference type="GO" id="GO:0031440">
    <property type="term" value="P:regulation of mRNA 3'-end processing"/>
    <property type="evidence" value="ECO:0000266"/>
    <property type="project" value="RGD"/>
</dbReference>
<dbReference type="GO" id="GO:0048168">
    <property type="term" value="P:regulation of neuronal synaptic plasticity"/>
    <property type="evidence" value="ECO:0000266"/>
    <property type="project" value="RGD"/>
</dbReference>
<dbReference type="GO" id="GO:0006417">
    <property type="term" value="P:regulation of translation"/>
    <property type="evidence" value="ECO:0000266"/>
    <property type="project" value="RGD"/>
</dbReference>
<dbReference type="GO" id="GO:0099547">
    <property type="term" value="P:regulation of translation at synapse, modulating synaptic transmission"/>
    <property type="evidence" value="ECO:0000266"/>
    <property type="project" value="RGD"/>
</dbReference>
<dbReference type="GO" id="GO:0007130">
    <property type="term" value="P:synaptonemal complex assembly"/>
    <property type="evidence" value="ECO:0000266"/>
    <property type="project" value="RGD"/>
</dbReference>
<dbReference type="CDD" id="cd19757">
    <property type="entry name" value="Bbox1"/>
    <property type="match status" value="1"/>
</dbReference>
<dbReference type="CDD" id="cd12723">
    <property type="entry name" value="RRM1_CPEB1"/>
    <property type="match status" value="1"/>
</dbReference>
<dbReference type="CDD" id="cd12725">
    <property type="entry name" value="RRM2_CPEB1"/>
    <property type="match status" value="1"/>
</dbReference>
<dbReference type="FunFam" id="3.30.70.330:FF:000054">
    <property type="entry name" value="Cytoplasmic polyadenylation element-binding protein 1"/>
    <property type="match status" value="1"/>
</dbReference>
<dbReference type="FunFam" id="3.30.70.330:FF:000086">
    <property type="entry name" value="Putative Cytoplasmic polyadenylation element-binding protein 1"/>
    <property type="match status" value="1"/>
</dbReference>
<dbReference type="FunFam" id="4.10.640.40:FF:000002">
    <property type="entry name" value="Putative Cytoplasmic polyadenylation element-binding protein 1"/>
    <property type="match status" value="1"/>
</dbReference>
<dbReference type="Gene3D" id="3.30.70.330">
    <property type="match status" value="2"/>
</dbReference>
<dbReference type="Gene3D" id="4.10.640.40">
    <property type="entry name" value="Cytoplasmic polyadenylation element-binding protein, ZZ domain"/>
    <property type="match status" value="1"/>
</dbReference>
<dbReference type="InterPro" id="IPR032292">
    <property type="entry name" value="CEBP1_N"/>
</dbReference>
<dbReference type="InterPro" id="IPR032296">
    <property type="entry name" value="CEBP_ZZ"/>
</dbReference>
<dbReference type="InterPro" id="IPR038446">
    <property type="entry name" value="CEBP_ZZ_sf"/>
</dbReference>
<dbReference type="InterPro" id="IPR034819">
    <property type="entry name" value="CPEB"/>
</dbReference>
<dbReference type="InterPro" id="IPR034977">
    <property type="entry name" value="CPEB1_RRM1"/>
</dbReference>
<dbReference type="InterPro" id="IPR012677">
    <property type="entry name" value="Nucleotide-bd_a/b_plait_sf"/>
</dbReference>
<dbReference type="InterPro" id="IPR035979">
    <property type="entry name" value="RBD_domain_sf"/>
</dbReference>
<dbReference type="InterPro" id="IPR000504">
    <property type="entry name" value="RRM_dom"/>
</dbReference>
<dbReference type="PANTHER" id="PTHR12566">
    <property type="entry name" value="CYTOPLASMIC POLYADENYLATION ELEMENT BINDING PROTEIN CPEB"/>
    <property type="match status" value="1"/>
</dbReference>
<dbReference type="PANTHER" id="PTHR12566:SF9">
    <property type="entry name" value="CYTOPLASMIC POLYADENYLATION ELEMENT-BINDING PROTEIN 1"/>
    <property type="match status" value="1"/>
</dbReference>
<dbReference type="Pfam" id="PF16368">
    <property type="entry name" value="CEBP1_N"/>
    <property type="match status" value="1"/>
</dbReference>
<dbReference type="Pfam" id="PF16366">
    <property type="entry name" value="CEBP_ZZ"/>
    <property type="match status" value="1"/>
</dbReference>
<dbReference type="Pfam" id="PF16367">
    <property type="entry name" value="RRM_7"/>
    <property type="match status" value="1"/>
</dbReference>
<dbReference type="SMART" id="SM00360">
    <property type="entry name" value="RRM"/>
    <property type="match status" value="2"/>
</dbReference>
<dbReference type="SUPFAM" id="SSF54928">
    <property type="entry name" value="RNA-binding domain, RBD"/>
    <property type="match status" value="1"/>
</dbReference>
<dbReference type="PROSITE" id="PS50102">
    <property type="entry name" value="RRM"/>
    <property type="match status" value="2"/>
</dbReference>
<sequence>MAFSLEEESGRIKDCWDNQEVPALSTCSNANIFRRINAILDDSLDFSKVCTTPINRGIHDQLPDFQDSEEAITSRMLFPTSAQESPRGLPDANGLCLGLQSLSLTGWDRPWSTQDSDSSAQSNTQSVLSMLQNPLGNVLGKTPLSFLSLDPLGSDLDKFPAPSVRGSRLDTRPILDSRSSSPSDSDTSGFSSGSDHLSDLISSLRISPPLPFLSMTGNGPRDPLKMGVGSRMDQEQAALAAVAPSPTSAPKRWPGTSVWPSWDLLGAPKDPFSIEREARLHRQAAAVNEATCTWSGQLPPRNYKNPIYSCKVFLGGVPWDITEAGLVNTFRVFGSLSVEWPGKDGKHPRCPPKGNMPKGYVYLVFELEKSVRALLQACSHDPLSPDGLSEYYFKMSSRRMRCKEVQVIPWVLADSNFVWSPSQRLDPSRTVFVGALHGMLNAEALAAILNDLFGGVVYAGIDTDKHKYPIGSGRVTFNNQRSYLKAVTAAFVEIKTTKFTKKVQIDPYLEDSLCLICSSQPGPFFCRDQVCFKYFCRSCWHWRHSMEGLRHHSPLMRNQKN</sequence>
<organism>
    <name type="scientific">Rattus norvegicus</name>
    <name type="common">Rat</name>
    <dbReference type="NCBI Taxonomy" id="10116"/>
    <lineage>
        <taxon>Eukaryota</taxon>
        <taxon>Metazoa</taxon>
        <taxon>Chordata</taxon>
        <taxon>Craniata</taxon>
        <taxon>Vertebrata</taxon>
        <taxon>Euteleostomi</taxon>
        <taxon>Mammalia</taxon>
        <taxon>Eutheria</taxon>
        <taxon>Euarchontoglires</taxon>
        <taxon>Glires</taxon>
        <taxon>Rodentia</taxon>
        <taxon>Myomorpha</taxon>
        <taxon>Muroidea</taxon>
        <taxon>Muridae</taxon>
        <taxon>Murinae</taxon>
        <taxon>Rattus</taxon>
    </lineage>
</organism>
<accession>P0C279</accession>
<proteinExistence type="evidence at protein level"/>
<gene>
    <name type="primary">Cpeb1</name>
</gene>
<comment type="function">
    <text evidence="2 3">Sequence-specific RNA-binding protein that regulates mRNA cytoplasmic polyadenylation and translation initiation during oocyte maturation, early development and at postsynapse sites of neurons. Binds to the cytoplasmic polyadenylation element (CPE), an uridine-rich sequence element (consensus sequence 5'-UUUUUAU-3') within the 3'-UTR of mRNAs. In absence of phosphorylation and in association with TACC3 is also involved as a repressor of translation of CPE-containing mRNA; a repression that is relieved by phosphorylation or degradation. Involved in the transport of CPE-containing mRNA to dendrites; those mRNAs may be transported to dendrites in a translationally dormant form and translationally activated at synapses. Its interaction with APLP1 promotes local CPE-containing mRNA polyadenylation and translation activation. Induces the assembly of stress granules in the absence of stress. Required for cell cycle progression, specifically for prophase entry.</text>
</comment>
<comment type="subunit">
    <text evidence="2 3">Interacts with kinesin, dynein, APLP1, APLP2, TENT2/GLD2 and APP. Both phosphorylated and non phosphorylated forms interact with APLP1 (By similarity). Interacts with TENT4B; the interaction is required for TENT4B-mediated translational control (By similarity).</text>
</comment>
<comment type="subcellular location">
    <subcellularLocation>
        <location evidence="1">Cytoplasm</location>
    </subcellularLocation>
    <subcellularLocation>
        <location evidence="1">Synapse</location>
    </subcellularLocation>
    <subcellularLocation>
        <location evidence="1">Cytoplasm</location>
        <location evidence="1">P-body</location>
    </subcellularLocation>
    <subcellularLocation>
        <location evidence="1">Cytoplasmic granule</location>
    </subcellularLocation>
    <subcellularLocation>
        <location evidence="1">Membrane</location>
    </subcellularLocation>
    <subcellularLocation>
        <location evidence="1">Postsynaptic density</location>
    </subcellularLocation>
    <text evidence="1">Localizes in synaptosomes at dendritic synapses of neurons. Strongly enriched in postsynaptic density fractions. Transported into dendrites in a microtubule-dependent fashion and colocalizes in mRNA-containing particles with TACC3, dynein and kinesin (By similarity). Membrane-associated (By similarity). Colocalizes at excitatory synapses with members of the polyadenylation and translation complex factors (CPSF, APLP1, TACC3, AURKA, SYP, etc.) including CPE-containing RNAs (By similarity). In P-bodies and stress granules (By similarity). Recruited to stress granules (SGs) upon arsenite treatment (By similarity).</text>
</comment>
<comment type="tissue specificity">
    <text evidence="6">Expressed in hippocampus and cerebral cortex (at protein level). Expressed in hippocampus (dentate gyrus and CA1-CA4 regions), cerebellum (Purkinje cells), cortex, visual cortex (layers 1 and 2), mesencephalon, diencephalon and brain stem.</text>
</comment>
<comment type="domain">
    <text evidence="3">The 2 RRM domains and the C-terminal region mediate interaction with CPE-containing RNA. The interdomain linker (411-429) acts as a hinge to fix the relative orientation of the 2 RRMs. The ZZ domain (509-566) coordinates 2 Zn ions and is probably implicated in mediating interactions with other proteins in addition to increasing the affinity of the RRMs for the CPEs. A continuous hydrophobic interface is formed between the 2 RRM.</text>
</comment>
<comment type="PTM">
    <text evidence="1">Phosphorylated on serine/threonine residues by AURKA within positions 165 and 196. Phosphorylation and dephosphorylation on Thr-171 regulates cytoplasmic polyadenylation and translation of CPE-containing mRNAs. Phosphorylation on Thr-171 by AURKA and CAMK2A activates CPEB1. Phosphorylation on Thr-171 may be promoted by APLP1. Phosphorylation increases binding to RNA (By similarity).</text>
</comment>
<comment type="similarity">
    <text evidence="7">Belongs to the RRM CPEB family.</text>
</comment>
<evidence type="ECO:0000250" key="1"/>
<evidence type="ECO:0000250" key="2">
    <source>
        <dbReference type="UniProtKB" id="P70166"/>
    </source>
</evidence>
<evidence type="ECO:0000250" key="3">
    <source>
        <dbReference type="UniProtKB" id="Q9BZB8"/>
    </source>
</evidence>
<evidence type="ECO:0000255" key="4">
    <source>
        <dbReference type="PROSITE-ProRule" id="PRU00176"/>
    </source>
</evidence>
<evidence type="ECO:0000256" key="5">
    <source>
        <dbReference type="SAM" id="MobiDB-lite"/>
    </source>
</evidence>
<evidence type="ECO:0000269" key="6">
    <source>
    </source>
</evidence>
<evidence type="ECO:0000305" key="7"/>
<reference key="1">
    <citation type="journal article" date="2004" name="Nature">
        <title>Genome sequence of the Brown Norway rat yields insights into mammalian evolution.</title>
        <authorList>
            <person name="Gibbs R.A."/>
            <person name="Weinstock G.M."/>
            <person name="Metzker M.L."/>
            <person name="Muzny D.M."/>
            <person name="Sodergren E.J."/>
            <person name="Scherer S."/>
            <person name="Scott G."/>
            <person name="Steffen D."/>
            <person name="Worley K.C."/>
            <person name="Burch P.E."/>
            <person name="Okwuonu G."/>
            <person name="Hines S."/>
            <person name="Lewis L."/>
            <person name="Deramo C."/>
            <person name="Delgado O."/>
            <person name="Dugan-Rocha S."/>
            <person name="Miner G."/>
            <person name="Morgan M."/>
            <person name="Hawes A."/>
            <person name="Gill R."/>
            <person name="Holt R.A."/>
            <person name="Adams M.D."/>
            <person name="Amanatides P.G."/>
            <person name="Baden-Tillson H."/>
            <person name="Barnstead M."/>
            <person name="Chin S."/>
            <person name="Evans C.A."/>
            <person name="Ferriera S."/>
            <person name="Fosler C."/>
            <person name="Glodek A."/>
            <person name="Gu Z."/>
            <person name="Jennings D."/>
            <person name="Kraft C.L."/>
            <person name="Nguyen T."/>
            <person name="Pfannkoch C.M."/>
            <person name="Sitter C."/>
            <person name="Sutton G.G."/>
            <person name="Venter J.C."/>
            <person name="Woodage T."/>
            <person name="Smith D."/>
            <person name="Lee H.-M."/>
            <person name="Gustafson E."/>
            <person name="Cahill P."/>
            <person name="Kana A."/>
            <person name="Doucette-Stamm L."/>
            <person name="Weinstock K."/>
            <person name="Fechtel K."/>
            <person name="Weiss R.B."/>
            <person name="Dunn D.M."/>
            <person name="Green E.D."/>
            <person name="Blakesley R.W."/>
            <person name="Bouffard G.G."/>
            <person name="De Jong P.J."/>
            <person name="Osoegawa K."/>
            <person name="Zhu B."/>
            <person name="Marra M."/>
            <person name="Schein J."/>
            <person name="Bosdet I."/>
            <person name="Fjell C."/>
            <person name="Jones S."/>
            <person name="Krzywinski M."/>
            <person name="Mathewson C."/>
            <person name="Siddiqui A."/>
            <person name="Wye N."/>
            <person name="McPherson J."/>
            <person name="Zhao S."/>
            <person name="Fraser C.M."/>
            <person name="Shetty J."/>
            <person name="Shatsman S."/>
            <person name="Geer K."/>
            <person name="Chen Y."/>
            <person name="Abramzon S."/>
            <person name="Nierman W.C."/>
            <person name="Havlak P.H."/>
            <person name="Chen R."/>
            <person name="Durbin K.J."/>
            <person name="Egan A."/>
            <person name="Ren Y."/>
            <person name="Song X.-Z."/>
            <person name="Li B."/>
            <person name="Liu Y."/>
            <person name="Qin X."/>
            <person name="Cawley S."/>
            <person name="Cooney A.J."/>
            <person name="D'Souza L.M."/>
            <person name="Martin K."/>
            <person name="Wu J.Q."/>
            <person name="Gonzalez-Garay M.L."/>
            <person name="Jackson A.R."/>
            <person name="Kalafus K.J."/>
            <person name="McLeod M.P."/>
            <person name="Milosavljevic A."/>
            <person name="Virk D."/>
            <person name="Volkov A."/>
            <person name="Wheeler D.A."/>
            <person name="Zhang Z."/>
            <person name="Bailey J.A."/>
            <person name="Eichler E.E."/>
            <person name="Tuzun E."/>
            <person name="Birney E."/>
            <person name="Mongin E."/>
            <person name="Ureta-Vidal A."/>
            <person name="Woodwark C."/>
            <person name="Zdobnov E."/>
            <person name="Bork P."/>
            <person name="Suyama M."/>
            <person name="Torrents D."/>
            <person name="Alexandersson M."/>
            <person name="Trask B.J."/>
            <person name="Young J.M."/>
            <person name="Huang H."/>
            <person name="Wang H."/>
            <person name="Xing H."/>
            <person name="Daniels S."/>
            <person name="Gietzen D."/>
            <person name="Schmidt J."/>
            <person name="Stevens K."/>
            <person name="Vitt U."/>
            <person name="Wingrove J."/>
            <person name="Camara F."/>
            <person name="Mar Alba M."/>
            <person name="Abril J.F."/>
            <person name="Guigo R."/>
            <person name="Smit A."/>
            <person name="Dubchak I."/>
            <person name="Rubin E.M."/>
            <person name="Couronne O."/>
            <person name="Poliakov A."/>
            <person name="Huebner N."/>
            <person name="Ganten D."/>
            <person name="Goesele C."/>
            <person name="Hummel O."/>
            <person name="Kreitler T."/>
            <person name="Lee Y.-A."/>
            <person name="Monti J."/>
            <person name="Schulz H."/>
            <person name="Zimdahl H."/>
            <person name="Himmelbauer H."/>
            <person name="Lehrach H."/>
            <person name="Jacob H.J."/>
            <person name="Bromberg S."/>
            <person name="Gullings-Handley J."/>
            <person name="Jensen-Seaman M.I."/>
            <person name="Kwitek A.E."/>
            <person name="Lazar J."/>
            <person name="Pasko D."/>
            <person name="Tonellato P.J."/>
            <person name="Twigger S."/>
            <person name="Ponting C.P."/>
            <person name="Duarte J.M."/>
            <person name="Rice S."/>
            <person name="Goodstadt L."/>
            <person name="Beatson S.A."/>
            <person name="Emes R.D."/>
            <person name="Winter E.E."/>
            <person name="Webber C."/>
            <person name="Brandt P."/>
            <person name="Nyakatura G."/>
            <person name="Adetobi M."/>
            <person name="Chiaromonte F."/>
            <person name="Elnitski L."/>
            <person name="Eswara P."/>
            <person name="Hardison R.C."/>
            <person name="Hou M."/>
            <person name="Kolbe D."/>
            <person name="Makova K."/>
            <person name="Miller W."/>
            <person name="Nekrutenko A."/>
            <person name="Riemer C."/>
            <person name="Schwartz S."/>
            <person name="Taylor J."/>
            <person name="Yang S."/>
            <person name="Zhang Y."/>
            <person name="Lindpaintner K."/>
            <person name="Andrews T.D."/>
            <person name="Caccamo M."/>
            <person name="Clamp M."/>
            <person name="Clarke L."/>
            <person name="Curwen V."/>
            <person name="Durbin R.M."/>
            <person name="Eyras E."/>
            <person name="Searle S.M."/>
            <person name="Cooper G.M."/>
            <person name="Batzoglou S."/>
            <person name="Brudno M."/>
            <person name="Sidow A."/>
            <person name="Stone E.A."/>
            <person name="Payseur B.A."/>
            <person name="Bourque G."/>
            <person name="Lopez-Otin C."/>
            <person name="Puente X.S."/>
            <person name="Chakrabarti K."/>
            <person name="Chatterji S."/>
            <person name="Dewey C."/>
            <person name="Pachter L."/>
            <person name="Bray N."/>
            <person name="Yap V.B."/>
            <person name="Caspi A."/>
            <person name="Tesler G."/>
            <person name="Pevzner P.A."/>
            <person name="Haussler D."/>
            <person name="Roskin K.M."/>
            <person name="Baertsch R."/>
            <person name="Clawson H."/>
            <person name="Furey T.S."/>
            <person name="Hinrichs A.S."/>
            <person name="Karolchik D."/>
            <person name="Kent W.J."/>
            <person name="Rosenbloom K.R."/>
            <person name="Trumbower H."/>
            <person name="Weirauch M."/>
            <person name="Cooper D.N."/>
            <person name="Stenson P.D."/>
            <person name="Ma B."/>
            <person name="Brent M."/>
            <person name="Arumugam M."/>
            <person name="Shteynberg D."/>
            <person name="Copley R.R."/>
            <person name="Taylor M.S."/>
            <person name="Riethman H."/>
            <person name="Mudunuri U."/>
            <person name="Peterson J."/>
            <person name="Guyer M."/>
            <person name="Felsenfeld A."/>
            <person name="Old S."/>
            <person name="Mockrin S."/>
            <person name="Collins F.S."/>
        </authorList>
    </citation>
    <scope>NUCLEOTIDE SEQUENCE [LARGE SCALE GENOMIC DNA]</scope>
    <source>
        <strain>Brown Norway</strain>
    </source>
</reference>
<reference key="2">
    <citation type="journal article" date="1998" name="Neuron">
        <title>CPEB-mediated cytoplasmic polyadenylation and the regulation of experience-dependent translation of alpha-CaMKII mRNA at synapses.</title>
        <authorList>
            <person name="Wu L."/>
            <person name="Wells D."/>
            <person name="Tay J."/>
            <person name="Mendis D."/>
            <person name="Abbott M.-A."/>
            <person name="Barnitt A."/>
            <person name="Quinlan E."/>
            <person name="Heynen A."/>
            <person name="Fallon J.R."/>
            <person name="Richter J.D."/>
        </authorList>
    </citation>
    <scope>SUBCELLULAR LOCATION</scope>
    <scope>TISSUE SPECIFICITY</scope>
</reference>
<protein>
    <recommendedName>
        <fullName>Cytoplasmic polyadenylation element-binding protein 1</fullName>
        <shortName>CPE-BP1</shortName>
        <shortName>CPE-binding protein 1</shortName>
        <shortName>CPEB</shortName>
        <shortName>CPEB-1</shortName>
    </recommendedName>
</protein>
<keyword id="KW-0010">Activator</keyword>
<keyword id="KW-0963">Cytoplasm</keyword>
<keyword id="KW-0472">Membrane</keyword>
<keyword id="KW-0479">Metal-binding</keyword>
<keyword id="KW-0507">mRNA processing</keyword>
<keyword id="KW-0597">Phosphoprotein</keyword>
<keyword id="KW-1185">Reference proteome</keyword>
<keyword id="KW-0677">Repeat</keyword>
<keyword id="KW-0678">Repressor</keyword>
<keyword id="KW-0687">Ribonucleoprotein</keyword>
<keyword id="KW-0694">RNA-binding</keyword>
<keyword id="KW-0770">Synapse</keyword>
<keyword id="KW-0810">Translation regulation</keyword>
<keyword id="KW-0862">Zinc</keyword>